<reference key="1">
    <citation type="journal article" date="2007" name="Microbiology">
        <title>Comparative analysis of the Corynebacterium glutamicum group and complete genome sequence of strain R.</title>
        <authorList>
            <person name="Yukawa H."/>
            <person name="Omumasaba C.A."/>
            <person name="Nonaka H."/>
            <person name="Kos P."/>
            <person name="Okai N."/>
            <person name="Suzuki N."/>
            <person name="Suda M."/>
            <person name="Tsuge Y."/>
            <person name="Watanabe J."/>
            <person name="Ikeda Y."/>
            <person name="Vertes A.A."/>
            <person name="Inui M."/>
        </authorList>
    </citation>
    <scope>NUCLEOTIDE SEQUENCE [LARGE SCALE GENOMIC DNA]</scope>
    <source>
        <strain>R</strain>
    </source>
</reference>
<dbReference type="EMBL" id="AP009044">
    <property type="protein sequence ID" value="BAF54547.1"/>
    <property type="molecule type" value="Genomic_DNA"/>
</dbReference>
<dbReference type="RefSeq" id="WP_003856167.1">
    <property type="nucleotide sequence ID" value="NC_009342.1"/>
</dbReference>
<dbReference type="SMR" id="A4QE81"/>
<dbReference type="GeneID" id="1019468"/>
<dbReference type="KEGG" id="cgt:cgR_1555"/>
<dbReference type="HOGENOM" id="CLU_183816_1_0_11"/>
<dbReference type="UniPathway" id="UPA00997"/>
<dbReference type="Proteomes" id="UP000006698">
    <property type="component" value="Chromosome"/>
</dbReference>
<dbReference type="GO" id="GO:0070628">
    <property type="term" value="F:proteasome binding"/>
    <property type="evidence" value="ECO:0007669"/>
    <property type="project" value="UniProtKB-UniRule"/>
</dbReference>
<dbReference type="GO" id="GO:0031386">
    <property type="term" value="F:protein tag activity"/>
    <property type="evidence" value="ECO:0007669"/>
    <property type="project" value="UniProtKB-UniRule"/>
</dbReference>
<dbReference type="GO" id="GO:0019941">
    <property type="term" value="P:modification-dependent protein catabolic process"/>
    <property type="evidence" value="ECO:0007669"/>
    <property type="project" value="UniProtKB-UniRule"/>
</dbReference>
<dbReference type="GO" id="GO:0010498">
    <property type="term" value="P:proteasomal protein catabolic process"/>
    <property type="evidence" value="ECO:0007669"/>
    <property type="project" value="UniProtKB-UniRule"/>
</dbReference>
<dbReference type="GO" id="GO:0070490">
    <property type="term" value="P:protein pupylation"/>
    <property type="evidence" value="ECO:0007669"/>
    <property type="project" value="UniProtKB-UniRule"/>
</dbReference>
<dbReference type="HAMAP" id="MF_02106">
    <property type="entry name" value="Pup"/>
    <property type="match status" value="1"/>
</dbReference>
<dbReference type="InterPro" id="IPR008515">
    <property type="entry name" value="Ubiquitin-like_Pup"/>
</dbReference>
<dbReference type="NCBIfam" id="TIGR03687">
    <property type="entry name" value="pupylate_cterm"/>
    <property type="match status" value="1"/>
</dbReference>
<dbReference type="Pfam" id="PF05639">
    <property type="entry name" value="Pup"/>
    <property type="match status" value="1"/>
</dbReference>
<feature type="chain" id="PRO_0000390577" description="Prokaryotic ubiquitin-like protein Pup">
    <location>
        <begin position="1"/>
        <end position="64"/>
    </location>
</feature>
<feature type="region of interest" description="Disordered" evidence="2">
    <location>
        <begin position="1"/>
        <end position="32"/>
    </location>
</feature>
<feature type="region of interest" description="ARC ATPase binding" evidence="1">
    <location>
        <begin position="20"/>
        <end position="58"/>
    </location>
</feature>
<feature type="compositionally biased region" description="Polar residues" evidence="2">
    <location>
        <begin position="21"/>
        <end position="32"/>
    </location>
</feature>
<feature type="cross-link" description="Isoglutamyl lysine isopeptide (Glu-Lys) (interchain with K-? in acceptor proteins)" evidence="1">
    <location>
        <position position="64"/>
    </location>
</feature>
<keyword id="KW-1017">Isopeptide bond</keyword>
<keyword id="KW-0833">Ubl conjugation pathway</keyword>
<name>PUP_CORGB</name>
<protein>
    <recommendedName>
        <fullName evidence="1">Prokaryotic ubiquitin-like protein Pup</fullName>
    </recommendedName>
    <alternativeName>
        <fullName evidence="1">Bacterial ubiquitin-like modifier</fullName>
    </alternativeName>
</protein>
<comment type="function">
    <text evidence="1">Protein modifier that is covalently attached to lysine residues of substrate proteins, thereby targeting them for proteasomal degradation. The tagging system is termed pupylation.</text>
</comment>
<comment type="pathway">
    <text evidence="1">Protein degradation; proteasomal Pup-dependent pathway.</text>
</comment>
<comment type="subunit">
    <text evidence="1">Strongly interacts with the proteasome-associated ATPase ARC through a hydrophobic interface; the interacting region of Pup lies in its C-terminal half. There is one Pup binding site per ARC hexamer ring.</text>
</comment>
<comment type="domain">
    <text evidence="1">The N-terminal unstructured half of Pup provides a signal required to initiate unfolding and degradation by the proteasome but is not needed for pupylation, while the C-terminal helical half of Pup interacts with ARC to target proteins to the proteasome.</text>
</comment>
<comment type="similarity">
    <text evidence="1">Belongs to the prokaryotic ubiquitin-like protein family.</text>
</comment>
<sequence>MNAKQTQIMGGGGRDEDNAEDSAQASGQVQINTEGVDSLLDEIDGLLENNAEEFVRSYVQKGGE</sequence>
<organism>
    <name type="scientific">Corynebacterium glutamicum (strain R)</name>
    <dbReference type="NCBI Taxonomy" id="340322"/>
    <lineage>
        <taxon>Bacteria</taxon>
        <taxon>Bacillati</taxon>
        <taxon>Actinomycetota</taxon>
        <taxon>Actinomycetes</taxon>
        <taxon>Mycobacteriales</taxon>
        <taxon>Corynebacteriaceae</taxon>
        <taxon>Corynebacterium</taxon>
    </lineage>
</organism>
<accession>A4QE81</accession>
<gene>
    <name evidence="1" type="primary">pup</name>
    <name type="ordered locus">cgR_1555</name>
</gene>
<proteinExistence type="inferred from homology"/>
<evidence type="ECO:0000255" key="1">
    <source>
        <dbReference type="HAMAP-Rule" id="MF_02106"/>
    </source>
</evidence>
<evidence type="ECO:0000256" key="2">
    <source>
        <dbReference type="SAM" id="MobiDB-lite"/>
    </source>
</evidence>